<keyword id="KW-0496">Mitochondrion</keyword>
<keyword id="KW-1185">Reference proteome</keyword>
<name>RRG8_EREGS</name>
<reference key="1">
    <citation type="journal article" date="2004" name="Science">
        <title>The Ashbya gossypii genome as a tool for mapping the ancient Saccharomyces cerevisiae genome.</title>
        <authorList>
            <person name="Dietrich F.S."/>
            <person name="Voegeli S."/>
            <person name="Brachat S."/>
            <person name="Lerch A."/>
            <person name="Gates K."/>
            <person name="Steiner S."/>
            <person name="Mohr C."/>
            <person name="Poehlmann R."/>
            <person name="Luedi P."/>
            <person name="Choi S."/>
            <person name="Wing R.A."/>
            <person name="Flavier A."/>
            <person name="Gaffney T.D."/>
            <person name="Philippsen P."/>
        </authorList>
    </citation>
    <scope>NUCLEOTIDE SEQUENCE [LARGE SCALE GENOMIC DNA]</scope>
    <source>
        <strain>ATCC 10895 / CBS 109.51 / FGSC 9923 / NRRL Y-1056</strain>
    </source>
</reference>
<reference key="2">
    <citation type="journal article" date="2013" name="G3 (Bethesda)">
        <title>Genomes of Ashbya fungi isolated from insects reveal four mating-type loci, numerous translocations, lack of transposons, and distinct gene duplications.</title>
        <authorList>
            <person name="Dietrich F.S."/>
            <person name="Voegeli S."/>
            <person name="Kuo S."/>
            <person name="Philippsen P."/>
        </authorList>
    </citation>
    <scope>GENOME REANNOTATION</scope>
    <source>
        <strain>ATCC 10895 / CBS 109.51 / FGSC 9923 / NRRL Y-1056</strain>
    </source>
</reference>
<proteinExistence type="inferred from homology"/>
<feature type="chain" id="PRO_0000405464" description="Required for respiratory growth protein 8, mitochondrial">
    <location>
        <begin position="1"/>
        <end position="288"/>
    </location>
</feature>
<protein>
    <recommendedName>
        <fullName>Required for respiratory growth protein 8, mitochondrial</fullName>
    </recommendedName>
</protein>
<comment type="function">
    <text evidence="1">Required for respiratory activity and maintenance and expression of the mitochondrial genome.</text>
</comment>
<comment type="subcellular location">
    <subcellularLocation>
        <location evidence="1">Mitochondrion</location>
    </subcellularLocation>
</comment>
<comment type="similarity">
    <text evidence="2">Belongs to the RRG8 family.</text>
</comment>
<gene>
    <name type="primary">RRG8</name>
    <name type="ordered locus">AAR088W</name>
</gene>
<accession>Q75EJ1</accession>
<sequence>MPRSVPDMSELLVKGVKHVYGRKMRKTRPTLPNVESPLVTHFHRWAGKRIRLSFLAAELGTREGQHILPDWNLRGNLFAGLLAAPMRWDRLGNLRVPKSFLMQTKARALEAPSDGKLVKIISVVEERGPGSSSYVPQSKAALQRAKQAMFVPVALQQSDMRYFSSEEIAVDKDTLLAEYSAQLISKVKEGLEVLLSMSGTSHERVELEDWDVVVTYDPDNANDIELRKCKGIPGDPVVIILNMGCLKCTELEELVNLRLRNHEYGLVLKVLKNERLLKFMYRLITFSR</sequence>
<evidence type="ECO:0000250" key="1"/>
<evidence type="ECO:0000305" key="2"/>
<dbReference type="EMBL" id="AE016814">
    <property type="protein sequence ID" value="AAS50453.2"/>
    <property type="molecule type" value="Genomic_DNA"/>
</dbReference>
<dbReference type="RefSeq" id="NP_982629.2">
    <property type="nucleotide sequence ID" value="NM_207982.2"/>
</dbReference>
<dbReference type="FunCoup" id="Q75EJ1">
    <property type="interactions" value="35"/>
</dbReference>
<dbReference type="STRING" id="284811.Q75EJ1"/>
<dbReference type="EnsemblFungi" id="AAS50453">
    <property type="protein sequence ID" value="AAS50453"/>
    <property type="gene ID" value="AGOS_AAR088W"/>
</dbReference>
<dbReference type="GeneID" id="4618450"/>
<dbReference type="KEGG" id="ago:AGOS_AAR088W"/>
<dbReference type="eggNOG" id="ENOG502S46Y">
    <property type="taxonomic scope" value="Eukaryota"/>
</dbReference>
<dbReference type="HOGENOM" id="CLU_090059_0_0_1"/>
<dbReference type="InParanoid" id="Q75EJ1"/>
<dbReference type="OMA" id="FHRWAGK"/>
<dbReference type="OrthoDB" id="4035333at2759"/>
<dbReference type="Proteomes" id="UP000000591">
    <property type="component" value="Chromosome I"/>
</dbReference>
<dbReference type="GO" id="GO:0005739">
    <property type="term" value="C:mitochondrion"/>
    <property type="evidence" value="ECO:0007669"/>
    <property type="project" value="UniProtKB-SubCell"/>
</dbReference>
<dbReference type="GO" id="GO:0000002">
    <property type="term" value="P:mitochondrial genome maintenance"/>
    <property type="evidence" value="ECO:0007669"/>
    <property type="project" value="InterPro"/>
</dbReference>
<dbReference type="InterPro" id="IPR031415">
    <property type="entry name" value="Rrg8"/>
</dbReference>
<dbReference type="Pfam" id="PF17068">
    <property type="entry name" value="RRG8"/>
    <property type="match status" value="1"/>
</dbReference>
<organism>
    <name type="scientific">Eremothecium gossypii (strain ATCC 10895 / CBS 109.51 / FGSC 9923 / NRRL Y-1056)</name>
    <name type="common">Yeast</name>
    <name type="synonym">Ashbya gossypii</name>
    <dbReference type="NCBI Taxonomy" id="284811"/>
    <lineage>
        <taxon>Eukaryota</taxon>
        <taxon>Fungi</taxon>
        <taxon>Dikarya</taxon>
        <taxon>Ascomycota</taxon>
        <taxon>Saccharomycotina</taxon>
        <taxon>Saccharomycetes</taxon>
        <taxon>Saccharomycetales</taxon>
        <taxon>Saccharomycetaceae</taxon>
        <taxon>Eremothecium</taxon>
    </lineage>
</organism>